<name>APT_STAA3</name>
<sequence length="172" mass="19117">MDLKQYVSEVQDWPKPGVSFKDITTIMDNGEAYGYATDKIVEYAKDRDVDIVVGPEARGFIIGCPVAYSMGIGFAPVRKEGKLPREVIRYEYDLEYGTNVLTMHKDAIKPGQRVLITDDLLATGGTIEAAIKLVEKLGGIVVGIAFIIELKYLNGIEKIKDYDVMSLISYDE</sequence>
<evidence type="ECO:0000255" key="1">
    <source>
        <dbReference type="HAMAP-Rule" id="MF_00004"/>
    </source>
</evidence>
<proteinExistence type="inferred from homology"/>
<accession>Q2FG92</accession>
<comment type="function">
    <text evidence="1">Catalyzes a salvage reaction resulting in the formation of AMP, that is energically less costly than de novo synthesis.</text>
</comment>
<comment type="catalytic activity">
    <reaction evidence="1">
        <text>AMP + diphosphate = 5-phospho-alpha-D-ribose 1-diphosphate + adenine</text>
        <dbReference type="Rhea" id="RHEA:16609"/>
        <dbReference type="ChEBI" id="CHEBI:16708"/>
        <dbReference type="ChEBI" id="CHEBI:33019"/>
        <dbReference type="ChEBI" id="CHEBI:58017"/>
        <dbReference type="ChEBI" id="CHEBI:456215"/>
        <dbReference type="EC" id="2.4.2.7"/>
    </reaction>
</comment>
<comment type="pathway">
    <text evidence="1">Purine metabolism; AMP biosynthesis via salvage pathway; AMP from adenine: step 1/1.</text>
</comment>
<comment type="subunit">
    <text evidence="1">Homodimer.</text>
</comment>
<comment type="subcellular location">
    <subcellularLocation>
        <location evidence="1">Cytoplasm</location>
    </subcellularLocation>
</comment>
<comment type="similarity">
    <text evidence="1">Belongs to the purine/pyrimidine phosphoribosyltransferase family.</text>
</comment>
<gene>
    <name evidence="1" type="primary">apt</name>
    <name type="ordered locus">SAUSA300_1591</name>
</gene>
<keyword id="KW-0963">Cytoplasm</keyword>
<keyword id="KW-0328">Glycosyltransferase</keyword>
<keyword id="KW-0660">Purine salvage</keyword>
<keyword id="KW-0808">Transferase</keyword>
<dbReference type="EC" id="2.4.2.7" evidence="1"/>
<dbReference type="EMBL" id="CP000255">
    <property type="protein sequence ID" value="ABD22016.1"/>
    <property type="molecule type" value="Genomic_DNA"/>
</dbReference>
<dbReference type="RefSeq" id="WP_000364542.1">
    <property type="nucleotide sequence ID" value="NZ_CP027476.1"/>
</dbReference>
<dbReference type="SMR" id="Q2FG92"/>
<dbReference type="KEGG" id="saa:SAUSA300_1591"/>
<dbReference type="HOGENOM" id="CLU_063339_3_0_9"/>
<dbReference type="OMA" id="QAYDLEY"/>
<dbReference type="UniPathway" id="UPA00588">
    <property type="reaction ID" value="UER00646"/>
</dbReference>
<dbReference type="Proteomes" id="UP000001939">
    <property type="component" value="Chromosome"/>
</dbReference>
<dbReference type="GO" id="GO:0005737">
    <property type="term" value="C:cytoplasm"/>
    <property type="evidence" value="ECO:0007669"/>
    <property type="project" value="UniProtKB-SubCell"/>
</dbReference>
<dbReference type="GO" id="GO:0002055">
    <property type="term" value="F:adenine binding"/>
    <property type="evidence" value="ECO:0007669"/>
    <property type="project" value="TreeGrafter"/>
</dbReference>
<dbReference type="GO" id="GO:0003999">
    <property type="term" value="F:adenine phosphoribosyltransferase activity"/>
    <property type="evidence" value="ECO:0007669"/>
    <property type="project" value="UniProtKB-UniRule"/>
</dbReference>
<dbReference type="GO" id="GO:0016208">
    <property type="term" value="F:AMP binding"/>
    <property type="evidence" value="ECO:0007669"/>
    <property type="project" value="TreeGrafter"/>
</dbReference>
<dbReference type="GO" id="GO:0006168">
    <property type="term" value="P:adenine salvage"/>
    <property type="evidence" value="ECO:0007669"/>
    <property type="project" value="InterPro"/>
</dbReference>
<dbReference type="GO" id="GO:0044209">
    <property type="term" value="P:AMP salvage"/>
    <property type="evidence" value="ECO:0007669"/>
    <property type="project" value="UniProtKB-UniRule"/>
</dbReference>
<dbReference type="GO" id="GO:0006166">
    <property type="term" value="P:purine ribonucleoside salvage"/>
    <property type="evidence" value="ECO:0007669"/>
    <property type="project" value="UniProtKB-KW"/>
</dbReference>
<dbReference type="CDD" id="cd06223">
    <property type="entry name" value="PRTases_typeI"/>
    <property type="match status" value="1"/>
</dbReference>
<dbReference type="FunFam" id="3.40.50.2020:FF:000004">
    <property type="entry name" value="Adenine phosphoribosyltransferase"/>
    <property type="match status" value="1"/>
</dbReference>
<dbReference type="Gene3D" id="3.40.50.2020">
    <property type="match status" value="1"/>
</dbReference>
<dbReference type="HAMAP" id="MF_00004">
    <property type="entry name" value="Aden_phosphoribosyltr"/>
    <property type="match status" value="1"/>
</dbReference>
<dbReference type="InterPro" id="IPR005764">
    <property type="entry name" value="Ade_phspho_trans"/>
</dbReference>
<dbReference type="InterPro" id="IPR000836">
    <property type="entry name" value="PRibTrfase_dom"/>
</dbReference>
<dbReference type="InterPro" id="IPR029057">
    <property type="entry name" value="PRTase-like"/>
</dbReference>
<dbReference type="InterPro" id="IPR050054">
    <property type="entry name" value="UPRTase/APRTase"/>
</dbReference>
<dbReference type="NCBIfam" id="TIGR01090">
    <property type="entry name" value="apt"/>
    <property type="match status" value="1"/>
</dbReference>
<dbReference type="NCBIfam" id="NF002633">
    <property type="entry name" value="PRK02304.1-2"/>
    <property type="match status" value="1"/>
</dbReference>
<dbReference type="NCBIfam" id="NF002634">
    <property type="entry name" value="PRK02304.1-3"/>
    <property type="match status" value="1"/>
</dbReference>
<dbReference type="NCBIfam" id="NF002636">
    <property type="entry name" value="PRK02304.1-5"/>
    <property type="match status" value="1"/>
</dbReference>
<dbReference type="PANTHER" id="PTHR32315">
    <property type="entry name" value="ADENINE PHOSPHORIBOSYLTRANSFERASE"/>
    <property type="match status" value="1"/>
</dbReference>
<dbReference type="PANTHER" id="PTHR32315:SF3">
    <property type="entry name" value="ADENINE PHOSPHORIBOSYLTRANSFERASE"/>
    <property type="match status" value="1"/>
</dbReference>
<dbReference type="Pfam" id="PF00156">
    <property type="entry name" value="Pribosyltran"/>
    <property type="match status" value="1"/>
</dbReference>
<dbReference type="SUPFAM" id="SSF53271">
    <property type="entry name" value="PRTase-like"/>
    <property type="match status" value="1"/>
</dbReference>
<protein>
    <recommendedName>
        <fullName evidence="1">Adenine phosphoribosyltransferase</fullName>
        <shortName evidence="1">APRT</shortName>
        <ecNumber evidence="1">2.4.2.7</ecNumber>
    </recommendedName>
</protein>
<organism>
    <name type="scientific">Staphylococcus aureus (strain USA300)</name>
    <dbReference type="NCBI Taxonomy" id="367830"/>
    <lineage>
        <taxon>Bacteria</taxon>
        <taxon>Bacillati</taxon>
        <taxon>Bacillota</taxon>
        <taxon>Bacilli</taxon>
        <taxon>Bacillales</taxon>
        <taxon>Staphylococcaceae</taxon>
        <taxon>Staphylococcus</taxon>
    </lineage>
</organism>
<reference key="1">
    <citation type="journal article" date="2006" name="Lancet">
        <title>Complete genome sequence of USA300, an epidemic clone of community-acquired meticillin-resistant Staphylococcus aureus.</title>
        <authorList>
            <person name="Diep B.A."/>
            <person name="Gill S.R."/>
            <person name="Chang R.F."/>
            <person name="Phan T.H."/>
            <person name="Chen J.H."/>
            <person name="Davidson M.G."/>
            <person name="Lin F."/>
            <person name="Lin J."/>
            <person name="Carleton H.A."/>
            <person name="Mongodin E.F."/>
            <person name="Sensabaugh G.F."/>
            <person name="Perdreau-Remington F."/>
        </authorList>
    </citation>
    <scope>NUCLEOTIDE SEQUENCE [LARGE SCALE GENOMIC DNA]</scope>
    <source>
        <strain>USA300</strain>
    </source>
</reference>
<feature type="chain" id="PRO_1000000346" description="Adenine phosphoribosyltransferase">
    <location>
        <begin position="1"/>
        <end position="172"/>
    </location>
</feature>